<reference key="1">
    <citation type="journal article" date="1993" name="J. Gen. Microbiol.">
        <title>Cloning and sequence analysis of the dnaK gene region of Lactococcus lactis subsp. lactis.</title>
        <authorList>
            <person name="Eaton T.J."/>
            <person name="Shearman C.A."/>
            <person name="Gasson M.J."/>
        </authorList>
    </citation>
    <scope>NUCLEOTIDE SEQUENCE [GENOMIC DNA]</scope>
</reference>
<reference key="2">
    <citation type="journal article" date="2007" name="J. Bacteriol.">
        <title>The complete genome sequence of the lactic acid bacterial paradigm Lactococcus lactis subsp. cremoris MG1363.</title>
        <authorList>
            <person name="Wegmann U."/>
            <person name="O'Connell-Motherway M."/>
            <person name="Zomer A."/>
            <person name="Buist G."/>
            <person name="Shearman C."/>
            <person name="Canchaya C."/>
            <person name="Ventura M."/>
            <person name="Goesmann A."/>
            <person name="Gasson M.J."/>
            <person name="Kuipers O.P."/>
            <person name="van Sinderen D."/>
            <person name="Kok J."/>
        </authorList>
    </citation>
    <scope>NUCLEOTIDE SEQUENCE [LARGE SCALE GENOMIC DNA]</scope>
    <source>
        <strain>MG1363</strain>
    </source>
</reference>
<sequence>MSEETKEEIKNEKVDEEVTEELTEEALEDIVEEEINELDEAQKLATEWENKFLRVSAEMQNVQRRGNEERLQLVKYRSQDLAKKILSSLDNLERALAVEGLTDDVKKGLEMVQESLISALKEEGVEEVSYESFDHNLHMAVQTVPADDEHPADSIVQVFQKGYQLHERLLRPAMVVVAQ</sequence>
<keyword id="KW-0143">Chaperone</keyword>
<keyword id="KW-0963">Cytoplasm</keyword>
<keyword id="KW-0346">Stress response</keyword>
<comment type="function">
    <text evidence="1">Participates actively in the response to hyperosmotic and heat shock by preventing the aggregation of stress-denatured proteins, in association with DnaK and GrpE. It is the nucleotide exchange factor for DnaK and may function as a thermosensor. Unfolded proteins bind initially to DnaJ; upon interaction with the DnaJ-bound protein, DnaK hydrolyzes its bound ATP, resulting in the formation of a stable complex. GrpE releases ADP from DnaK; ATP binding to DnaK triggers the release of the substrate protein, thus completing the reaction cycle. Several rounds of ATP-dependent interactions between DnaJ, DnaK and GrpE are required for fully efficient folding.</text>
</comment>
<comment type="subunit">
    <text evidence="1">Homodimer.</text>
</comment>
<comment type="subcellular location">
    <subcellularLocation>
        <location evidence="1">Cytoplasm</location>
    </subcellularLocation>
</comment>
<comment type="similarity">
    <text evidence="1">Belongs to the GrpE family.</text>
</comment>
<name>GRPE_LACLM</name>
<protein>
    <recommendedName>
        <fullName evidence="1">Protein GrpE</fullName>
    </recommendedName>
    <alternativeName>
        <fullName evidence="1">HSP-70 cofactor</fullName>
    </alternativeName>
</protein>
<organism>
    <name type="scientific">Lactococcus lactis subsp. cremoris (strain MG1363)</name>
    <dbReference type="NCBI Taxonomy" id="416870"/>
    <lineage>
        <taxon>Bacteria</taxon>
        <taxon>Bacillati</taxon>
        <taxon>Bacillota</taxon>
        <taxon>Bacilli</taxon>
        <taxon>Lactobacillales</taxon>
        <taxon>Streptococcaceae</taxon>
        <taxon>Lactococcus</taxon>
        <taxon>Lactococcus cremoris subsp. cremoris</taxon>
    </lineage>
</organism>
<dbReference type="EMBL" id="X76642">
    <property type="protein sequence ID" value="CAA54088.1"/>
    <property type="molecule type" value="Genomic_DNA"/>
</dbReference>
<dbReference type="EMBL" id="AM406671">
    <property type="protein sequence ID" value="CAL98150.1"/>
    <property type="molecule type" value="Genomic_DNA"/>
</dbReference>
<dbReference type="PIR" id="S39341">
    <property type="entry name" value="S39341"/>
</dbReference>
<dbReference type="RefSeq" id="WP_011835409.1">
    <property type="nucleotide sequence ID" value="NC_009004.1"/>
</dbReference>
<dbReference type="SMR" id="P42369"/>
<dbReference type="STRING" id="416870.llmg_1575"/>
<dbReference type="GeneID" id="61109252"/>
<dbReference type="KEGG" id="llm:llmg_1575"/>
<dbReference type="eggNOG" id="COG0576">
    <property type="taxonomic scope" value="Bacteria"/>
</dbReference>
<dbReference type="HOGENOM" id="CLU_057217_6_3_9"/>
<dbReference type="OrthoDB" id="9812586at2"/>
<dbReference type="PhylomeDB" id="P42369"/>
<dbReference type="Proteomes" id="UP000000364">
    <property type="component" value="Chromosome"/>
</dbReference>
<dbReference type="GO" id="GO:0005737">
    <property type="term" value="C:cytoplasm"/>
    <property type="evidence" value="ECO:0007669"/>
    <property type="project" value="UniProtKB-SubCell"/>
</dbReference>
<dbReference type="GO" id="GO:0000774">
    <property type="term" value="F:adenyl-nucleotide exchange factor activity"/>
    <property type="evidence" value="ECO:0007669"/>
    <property type="project" value="InterPro"/>
</dbReference>
<dbReference type="GO" id="GO:0042803">
    <property type="term" value="F:protein homodimerization activity"/>
    <property type="evidence" value="ECO:0007669"/>
    <property type="project" value="InterPro"/>
</dbReference>
<dbReference type="GO" id="GO:0051087">
    <property type="term" value="F:protein-folding chaperone binding"/>
    <property type="evidence" value="ECO:0007669"/>
    <property type="project" value="InterPro"/>
</dbReference>
<dbReference type="GO" id="GO:0051082">
    <property type="term" value="F:unfolded protein binding"/>
    <property type="evidence" value="ECO:0007669"/>
    <property type="project" value="TreeGrafter"/>
</dbReference>
<dbReference type="GO" id="GO:0006457">
    <property type="term" value="P:protein folding"/>
    <property type="evidence" value="ECO:0007669"/>
    <property type="project" value="InterPro"/>
</dbReference>
<dbReference type="CDD" id="cd00446">
    <property type="entry name" value="GrpE"/>
    <property type="match status" value="1"/>
</dbReference>
<dbReference type="FunFam" id="2.30.22.10:FF:000001">
    <property type="entry name" value="Protein GrpE"/>
    <property type="match status" value="1"/>
</dbReference>
<dbReference type="Gene3D" id="3.90.20.20">
    <property type="match status" value="1"/>
</dbReference>
<dbReference type="Gene3D" id="2.30.22.10">
    <property type="entry name" value="Head domain of nucleotide exchange factor GrpE"/>
    <property type="match status" value="1"/>
</dbReference>
<dbReference type="HAMAP" id="MF_01151">
    <property type="entry name" value="GrpE"/>
    <property type="match status" value="1"/>
</dbReference>
<dbReference type="InterPro" id="IPR000740">
    <property type="entry name" value="GrpE"/>
</dbReference>
<dbReference type="InterPro" id="IPR013805">
    <property type="entry name" value="GrpE_coiled_coil"/>
</dbReference>
<dbReference type="InterPro" id="IPR009012">
    <property type="entry name" value="GrpE_head"/>
</dbReference>
<dbReference type="NCBIfam" id="NF010738">
    <property type="entry name" value="PRK14140.1"/>
    <property type="match status" value="1"/>
</dbReference>
<dbReference type="NCBIfam" id="NF010753">
    <property type="entry name" value="PRK14156.1"/>
    <property type="match status" value="1"/>
</dbReference>
<dbReference type="NCBIfam" id="NF010759">
    <property type="entry name" value="PRK14162.1"/>
    <property type="match status" value="1"/>
</dbReference>
<dbReference type="PANTHER" id="PTHR21237">
    <property type="entry name" value="GRPE PROTEIN"/>
    <property type="match status" value="1"/>
</dbReference>
<dbReference type="PANTHER" id="PTHR21237:SF23">
    <property type="entry name" value="GRPE PROTEIN HOMOLOG, MITOCHONDRIAL"/>
    <property type="match status" value="1"/>
</dbReference>
<dbReference type="Pfam" id="PF01025">
    <property type="entry name" value="GrpE"/>
    <property type="match status" value="1"/>
</dbReference>
<dbReference type="PRINTS" id="PR00773">
    <property type="entry name" value="GRPEPROTEIN"/>
</dbReference>
<dbReference type="SUPFAM" id="SSF58014">
    <property type="entry name" value="Coiled-coil domain of nucleotide exchange factor GrpE"/>
    <property type="match status" value="1"/>
</dbReference>
<dbReference type="SUPFAM" id="SSF51064">
    <property type="entry name" value="Head domain of nucleotide exchange factor GrpE"/>
    <property type="match status" value="1"/>
</dbReference>
<dbReference type="PROSITE" id="PS01071">
    <property type="entry name" value="GRPE"/>
    <property type="match status" value="1"/>
</dbReference>
<accession>P42369</accession>
<accession>A2RLI2</accession>
<feature type="chain" id="PRO_0000113800" description="Protein GrpE">
    <location>
        <begin position="1"/>
        <end position="179"/>
    </location>
</feature>
<feature type="region of interest" description="Disordered" evidence="2">
    <location>
        <begin position="1"/>
        <end position="20"/>
    </location>
</feature>
<proteinExistence type="inferred from homology"/>
<evidence type="ECO:0000255" key="1">
    <source>
        <dbReference type="HAMAP-Rule" id="MF_01151"/>
    </source>
</evidence>
<evidence type="ECO:0000256" key="2">
    <source>
        <dbReference type="SAM" id="MobiDB-lite"/>
    </source>
</evidence>
<gene>
    <name evidence="1" type="primary">grpE</name>
    <name type="ordered locus">llmg_1575</name>
</gene>